<protein>
    <recommendedName>
        <fullName evidence="1">UDP-N-acetylenolpyruvoylglucosamine reductase</fullName>
        <ecNumber evidence="1">1.3.1.98</ecNumber>
    </recommendedName>
    <alternativeName>
        <fullName evidence="1">UDP-N-acetylmuramate dehydrogenase</fullName>
    </alternativeName>
</protein>
<feature type="chain" id="PRO_0000224725" description="UDP-N-acetylenolpyruvoylglucosamine reductase">
    <location>
        <begin position="1"/>
        <end position="295"/>
    </location>
</feature>
<feature type="domain" description="FAD-binding PCMH-type" evidence="1">
    <location>
        <begin position="23"/>
        <end position="188"/>
    </location>
</feature>
<feature type="active site" evidence="1">
    <location>
        <position position="167"/>
    </location>
</feature>
<feature type="active site" description="Proton donor" evidence="1">
    <location>
        <position position="217"/>
    </location>
</feature>
<feature type="active site" evidence="1">
    <location>
        <position position="287"/>
    </location>
</feature>
<dbReference type="EC" id="1.3.1.98" evidence="1"/>
<dbReference type="EMBL" id="CP000056">
    <property type="protein sequence ID" value="AAX71915.1"/>
    <property type="molecule type" value="Genomic_DNA"/>
</dbReference>
<dbReference type="RefSeq" id="WP_011284769.1">
    <property type="nucleotide sequence ID" value="NC_007296.2"/>
</dbReference>
<dbReference type="SMR" id="Q48TP5"/>
<dbReference type="KEGG" id="spb:M28_Spy0802"/>
<dbReference type="HOGENOM" id="CLU_035304_1_1_9"/>
<dbReference type="UniPathway" id="UPA00219"/>
<dbReference type="GO" id="GO:0005829">
    <property type="term" value="C:cytosol"/>
    <property type="evidence" value="ECO:0007669"/>
    <property type="project" value="TreeGrafter"/>
</dbReference>
<dbReference type="GO" id="GO:0071949">
    <property type="term" value="F:FAD binding"/>
    <property type="evidence" value="ECO:0007669"/>
    <property type="project" value="InterPro"/>
</dbReference>
<dbReference type="GO" id="GO:0008762">
    <property type="term" value="F:UDP-N-acetylmuramate dehydrogenase activity"/>
    <property type="evidence" value="ECO:0007669"/>
    <property type="project" value="UniProtKB-UniRule"/>
</dbReference>
<dbReference type="GO" id="GO:0051301">
    <property type="term" value="P:cell division"/>
    <property type="evidence" value="ECO:0007669"/>
    <property type="project" value="UniProtKB-KW"/>
</dbReference>
<dbReference type="GO" id="GO:0071555">
    <property type="term" value="P:cell wall organization"/>
    <property type="evidence" value="ECO:0007669"/>
    <property type="project" value="UniProtKB-KW"/>
</dbReference>
<dbReference type="GO" id="GO:0009252">
    <property type="term" value="P:peptidoglycan biosynthetic process"/>
    <property type="evidence" value="ECO:0007669"/>
    <property type="project" value="UniProtKB-UniRule"/>
</dbReference>
<dbReference type="GO" id="GO:0008360">
    <property type="term" value="P:regulation of cell shape"/>
    <property type="evidence" value="ECO:0007669"/>
    <property type="project" value="UniProtKB-KW"/>
</dbReference>
<dbReference type="Gene3D" id="3.30.465.10">
    <property type="match status" value="1"/>
</dbReference>
<dbReference type="Gene3D" id="3.90.78.10">
    <property type="entry name" value="UDP-N-acetylenolpyruvoylglucosamine reductase, C-terminal domain"/>
    <property type="match status" value="1"/>
</dbReference>
<dbReference type="Gene3D" id="3.30.43.10">
    <property type="entry name" value="Uridine Diphospho-n-acetylenolpyruvylglucosamine Reductase, domain 2"/>
    <property type="match status" value="1"/>
</dbReference>
<dbReference type="HAMAP" id="MF_00037">
    <property type="entry name" value="MurB"/>
    <property type="match status" value="1"/>
</dbReference>
<dbReference type="InterPro" id="IPR016166">
    <property type="entry name" value="FAD-bd_PCMH"/>
</dbReference>
<dbReference type="InterPro" id="IPR036318">
    <property type="entry name" value="FAD-bd_PCMH-like_sf"/>
</dbReference>
<dbReference type="InterPro" id="IPR016167">
    <property type="entry name" value="FAD-bd_PCMH_sub1"/>
</dbReference>
<dbReference type="InterPro" id="IPR016169">
    <property type="entry name" value="FAD-bd_PCMH_sub2"/>
</dbReference>
<dbReference type="InterPro" id="IPR003170">
    <property type="entry name" value="MurB"/>
</dbReference>
<dbReference type="InterPro" id="IPR011601">
    <property type="entry name" value="MurB_C"/>
</dbReference>
<dbReference type="InterPro" id="IPR036635">
    <property type="entry name" value="MurB_C_sf"/>
</dbReference>
<dbReference type="InterPro" id="IPR006094">
    <property type="entry name" value="Oxid_FAD_bind_N"/>
</dbReference>
<dbReference type="NCBIfam" id="TIGR00179">
    <property type="entry name" value="murB"/>
    <property type="match status" value="1"/>
</dbReference>
<dbReference type="NCBIfam" id="NF010480">
    <property type="entry name" value="PRK13905.1"/>
    <property type="match status" value="1"/>
</dbReference>
<dbReference type="PANTHER" id="PTHR21071">
    <property type="entry name" value="UDP-N-ACETYLENOLPYRUVOYLGLUCOSAMINE REDUCTASE"/>
    <property type="match status" value="1"/>
</dbReference>
<dbReference type="PANTHER" id="PTHR21071:SF4">
    <property type="entry name" value="UDP-N-ACETYLENOLPYRUVOYLGLUCOSAMINE REDUCTASE"/>
    <property type="match status" value="1"/>
</dbReference>
<dbReference type="Pfam" id="PF01565">
    <property type="entry name" value="FAD_binding_4"/>
    <property type="match status" value="1"/>
</dbReference>
<dbReference type="Pfam" id="PF02873">
    <property type="entry name" value="MurB_C"/>
    <property type="match status" value="1"/>
</dbReference>
<dbReference type="SUPFAM" id="SSF56176">
    <property type="entry name" value="FAD-binding/transporter-associated domain-like"/>
    <property type="match status" value="1"/>
</dbReference>
<dbReference type="SUPFAM" id="SSF56194">
    <property type="entry name" value="Uridine diphospho-N-Acetylenolpyruvylglucosamine reductase, MurB, C-terminal domain"/>
    <property type="match status" value="1"/>
</dbReference>
<dbReference type="PROSITE" id="PS51387">
    <property type="entry name" value="FAD_PCMH"/>
    <property type="match status" value="1"/>
</dbReference>
<sequence length="295" mass="32363">MITELHGIDIRENEPLKHYTYTKVGGPADFLAFPRNHYELSRIVAYANKENMPWLVLGNASNLIVRDGGIRGFVIMFDKLNAVHLNGYTLEAEAGANLIETTKIAKFHSLTGFEFACGIPGSIGGAVFMNAGAYGGEISHIFLSAKVLTSSGEIKTISARDMAFGYRHSAIQETGDIVISAKFALKPGNYDTISQEMNRLNHLRQLKQPLEFPSCGSVFKRPPGHFAGQLIMEANLKGHRIGGVEVSEKHAGFMINVVDGTAKDYEDLIAYVIETVENHSGVRLEPEVRIIGENL</sequence>
<reference key="1">
    <citation type="journal article" date="2005" name="J. Infect. Dis.">
        <title>Genome sequence of a serotype M28 strain of group A Streptococcus: potential new insights into puerperal sepsis and bacterial disease specificity.</title>
        <authorList>
            <person name="Green N.M."/>
            <person name="Zhang S."/>
            <person name="Porcella S.F."/>
            <person name="Nagiec M.J."/>
            <person name="Barbian K.D."/>
            <person name="Beres S.B."/>
            <person name="Lefebvre R.B."/>
            <person name="Musser J.M."/>
        </authorList>
    </citation>
    <scope>NUCLEOTIDE SEQUENCE [LARGE SCALE GENOMIC DNA]</scope>
    <source>
        <strain>MGAS6180</strain>
    </source>
</reference>
<accession>Q48TP5</accession>
<organism>
    <name type="scientific">Streptococcus pyogenes serotype M28 (strain MGAS6180)</name>
    <dbReference type="NCBI Taxonomy" id="319701"/>
    <lineage>
        <taxon>Bacteria</taxon>
        <taxon>Bacillati</taxon>
        <taxon>Bacillota</taxon>
        <taxon>Bacilli</taxon>
        <taxon>Lactobacillales</taxon>
        <taxon>Streptococcaceae</taxon>
        <taxon>Streptococcus</taxon>
    </lineage>
</organism>
<proteinExistence type="inferred from homology"/>
<gene>
    <name evidence="1" type="primary">murB</name>
    <name type="ordered locus">M28_Spy0802</name>
</gene>
<keyword id="KW-0131">Cell cycle</keyword>
<keyword id="KW-0132">Cell division</keyword>
<keyword id="KW-0133">Cell shape</keyword>
<keyword id="KW-0961">Cell wall biogenesis/degradation</keyword>
<keyword id="KW-0963">Cytoplasm</keyword>
<keyword id="KW-0274">FAD</keyword>
<keyword id="KW-0285">Flavoprotein</keyword>
<keyword id="KW-0521">NADP</keyword>
<keyword id="KW-0560">Oxidoreductase</keyword>
<keyword id="KW-0573">Peptidoglycan synthesis</keyword>
<comment type="function">
    <text evidence="1">Cell wall formation.</text>
</comment>
<comment type="catalytic activity">
    <reaction evidence="1">
        <text>UDP-N-acetyl-alpha-D-muramate + NADP(+) = UDP-N-acetyl-3-O-(1-carboxyvinyl)-alpha-D-glucosamine + NADPH + H(+)</text>
        <dbReference type="Rhea" id="RHEA:12248"/>
        <dbReference type="ChEBI" id="CHEBI:15378"/>
        <dbReference type="ChEBI" id="CHEBI:57783"/>
        <dbReference type="ChEBI" id="CHEBI:58349"/>
        <dbReference type="ChEBI" id="CHEBI:68483"/>
        <dbReference type="ChEBI" id="CHEBI:70757"/>
        <dbReference type="EC" id="1.3.1.98"/>
    </reaction>
</comment>
<comment type="cofactor">
    <cofactor evidence="1">
        <name>FAD</name>
        <dbReference type="ChEBI" id="CHEBI:57692"/>
    </cofactor>
</comment>
<comment type="pathway">
    <text evidence="1">Cell wall biogenesis; peptidoglycan biosynthesis.</text>
</comment>
<comment type="subcellular location">
    <subcellularLocation>
        <location evidence="1">Cytoplasm</location>
    </subcellularLocation>
</comment>
<comment type="similarity">
    <text evidence="1">Belongs to the MurB family.</text>
</comment>
<evidence type="ECO:0000255" key="1">
    <source>
        <dbReference type="HAMAP-Rule" id="MF_00037"/>
    </source>
</evidence>
<name>MURB_STRPM</name>